<sequence>MDKKTSRLRRALRARKKIQELGVNRLVVHRTPRHTYAQVISPENVVLAAASTAEKAVTEQLKYTGNVDAAKVVGKTVAERAIEKGVAVVAFDRSGFKYHGRVAALADAAREAGLKF</sequence>
<evidence type="ECO:0000255" key="1">
    <source>
        <dbReference type="HAMAP-Rule" id="MF_01337"/>
    </source>
</evidence>
<evidence type="ECO:0000305" key="2"/>
<name>RL18_SHEHH</name>
<feature type="chain" id="PRO_1000086686" description="Large ribosomal subunit protein uL18">
    <location>
        <begin position="1"/>
        <end position="116"/>
    </location>
</feature>
<organism>
    <name type="scientific">Shewanella halifaxensis (strain HAW-EB4)</name>
    <dbReference type="NCBI Taxonomy" id="458817"/>
    <lineage>
        <taxon>Bacteria</taxon>
        <taxon>Pseudomonadati</taxon>
        <taxon>Pseudomonadota</taxon>
        <taxon>Gammaproteobacteria</taxon>
        <taxon>Alteromonadales</taxon>
        <taxon>Shewanellaceae</taxon>
        <taxon>Shewanella</taxon>
    </lineage>
</organism>
<reference key="1">
    <citation type="submission" date="2008-01" db="EMBL/GenBank/DDBJ databases">
        <title>Complete sequence of Shewanella halifaxensis HAW-EB4.</title>
        <authorList>
            <consortium name="US DOE Joint Genome Institute"/>
            <person name="Copeland A."/>
            <person name="Lucas S."/>
            <person name="Lapidus A."/>
            <person name="Glavina del Rio T."/>
            <person name="Dalin E."/>
            <person name="Tice H."/>
            <person name="Bruce D."/>
            <person name="Goodwin L."/>
            <person name="Pitluck S."/>
            <person name="Sims D."/>
            <person name="Brettin T."/>
            <person name="Detter J.C."/>
            <person name="Han C."/>
            <person name="Kuske C.R."/>
            <person name="Schmutz J."/>
            <person name="Larimer F."/>
            <person name="Land M."/>
            <person name="Hauser L."/>
            <person name="Kyrpides N."/>
            <person name="Kim E."/>
            <person name="Zhao J.-S."/>
            <person name="Richardson P."/>
        </authorList>
    </citation>
    <scope>NUCLEOTIDE SEQUENCE [LARGE SCALE GENOMIC DNA]</scope>
    <source>
        <strain>HAW-EB4</strain>
    </source>
</reference>
<gene>
    <name evidence="1" type="primary">rplR</name>
    <name type="ordered locus">Shal_4118</name>
</gene>
<dbReference type="EMBL" id="CP000931">
    <property type="protein sequence ID" value="ABZ78658.1"/>
    <property type="molecule type" value="Genomic_DNA"/>
</dbReference>
<dbReference type="RefSeq" id="WP_012153470.1">
    <property type="nucleotide sequence ID" value="NC_010334.1"/>
</dbReference>
<dbReference type="SMR" id="B0TLZ6"/>
<dbReference type="STRING" id="458817.Shal_4118"/>
<dbReference type="KEGG" id="shl:Shal_4118"/>
<dbReference type="eggNOG" id="COG0256">
    <property type="taxonomic scope" value="Bacteria"/>
</dbReference>
<dbReference type="HOGENOM" id="CLU_098841_0_1_6"/>
<dbReference type="OrthoDB" id="9810939at2"/>
<dbReference type="Proteomes" id="UP000001317">
    <property type="component" value="Chromosome"/>
</dbReference>
<dbReference type="GO" id="GO:0022625">
    <property type="term" value="C:cytosolic large ribosomal subunit"/>
    <property type="evidence" value="ECO:0007669"/>
    <property type="project" value="TreeGrafter"/>
</dbReference>
<dbReference type="GO" id="GO:0008097">
    <property type="term" value="F:5S rRNA binding"/>
    <property type="evidence" value="ECO:0007669"/>
    <property type="project" value="TreeGrafter"/>
</dbReference>
<dbReference type="GO" id="GO:0003735">
    <property type="term" value="F:structural constituent of ribosome"/>
    <property type="evidence" value="ECO:0007669"/>
    <property type="project" value="InterPro"/>
</dbReference>
<dbReference type="GO" id="GO:0006412">
    <property type="term" value="P:translation"/>
    <property type="evidence" value="ECO:0007669"/>
    <property type="project" value="UniProtKB-UniRule"/>
</dbReference>
<dbReference type="CDD" id="cd00432">
    <property type="entry name" value="Ribosomal_L18_L5e"/>
    <property type="match status" value="1"/>
</dbReference>
<dbReference type="FunFam" id="3.30.420.100:FF:000001">
    <property type="entry name" value="50S ribosomal protein L18"/>
    <property type="match status" value="1"/>
</dbReference>
<dbReference type="Gene3D" id="3.30.420.100">
    <property type="match status" value="1"/>
</dbReference>
<dbReference type="HAMAP" id="MF_01337_B">
    <property type="entry name" value="Ribosomal_uL18_B"/>
    <property type="match status" value="1"/>
</dbReference>
<dbReference type="InterPro" id="IPR004389">
    <property type="entry name" value="Ribosomal_uL18_bac-type"/>
</dbReference>
<dbReference type="InterPro" id="IPR005484">
    <property type="entry name" value="Ribosomal_uL18_bac/euk"/>
</dbReference>
<dbReference type="NCBIfam" id="TIGR00060">
    <property type="entry name" value="L18_bact"/>
    <property type="match status" value="1"/>
</dbReference>
<dbReference type="PANTHER" id="PTHR12899">
    <property type="entry name" value="39S RIBOSOMAL PROTEIN L18, MITOCHONDRIAL"/>
    <property type="match status" value="1"/>
</dbReference>
<dbReference type="PANTHER" id="PTHR12899:SF3">
    <property type="entry name" value="LARGE RIBOSOMAL SUBUNIT PROTEIN UL18M"/>
    <property type="match status" value="1"/>
</dbReference>
<dbReference type="Pfam" id="PF00861">
    <property type="entry name" value="Ribosomal_L18p"/>
    <property type="match status" value="1"/>
</dbReference>
<dbReference type="SUPFAM" id="SSF53137">
    <property type="entry name" value="Translational machinery components"/>
    <property type="match status" value="1"/>
</dbReference>
<proteinExistence type="inferred from homology"/>
<comment type="function">
    <text evidence="1">This is one of the proteins that bind and probably mediate the attachment of the 5S RNA into the large ribosomal subunit, where it forms part of the central protuberance.</text>
</comment>
<comment type="subunit">
    <text evidence="1">Part of the 50S ribosomal subunit; part of the 5S rRNA/L5/L18/L25 subcomplex. Contacts the 5S and 23S rRNAs.</text>
</comment>
<comment type="similarity">
    <text evidence="1">Belongs to the universal ribosomal protein uL18 family.</text>
</comment>
<accession>B0TLZ6</accession>
<protein>
    <recommendedName>
        <fullName evidence="1">Large ribosomal subunit protein uL18</fullName>
    </recommendedName>
    <alternativeName>
        <fullName evidence="2">50S ribosomal protein L18</fullName>
    </alternativeName>
</protein>
<keyword id="KW-0687">Ribonucleoprotein</keyword>
<keyword id="KW-0689">Ribosomal protein</keyword>
<keyword id="KW-0694">RNA-binding</keyword>
<keyword id="KW-0699">rRNA-binding</keyword>